<accession>C5D8V8</accession>
<sequence>MEQFHATTIFAIHHNGKAAMAGDGQVTFGNAVVMKHTAKKVRRLFQGKVLAGFAGSVADAFTLFEMFEGKLEEFNGNLPRAAVELAKEWRSDKVLRRLEAMLIVMDERHLLLVSGTGEVIEPDDGILAIGSGGNYALAAGRALKQYAGDQLSAKEIAKAALEIAANICVYTNDHIIVEEL</sequence>
<organism>
    <name type="scientific">Geobacillus sp. (strain WCH70)</name>
    <dbReference type="NCBI Taxonomy" id="471223"/>
    <lineage>
        <taxon>Bacteria</taxon>
        <taxon>Bacillati</taxon>
        <taxon>Bacillota</taxon>
        <taxon>Bacilli</taxon>
        <taxon>Bacillales</taxon>
        <taxon>Anoxybacillaceae</taxon>
        <taxon>Geobacillus</taxon>
    </lineage>
</organism>
<comment type="function">
    <text evidence="1">Protease subunit of a proteasome-like degradation complex believed to be a general protein degrading machinery.</text>
</comment>
<comment type="catalytic activity">
    <reaction evidence="1">
        <text>ATP-dependent cleavage of peptide bonds with broad specificity.</text>
        <dbReference type="EC" id="3.4.25.2"/>
    </reaction>
</comment>
<comment type="activity regulation">
    <text evidence="1">Allosterically activated by HslU binding.</text>
</comment>
<comment type="subunit">
    <text evidence="1">A double ring-shaped homohexamer of HslV is capped on each side by a ring-shaped HslU homohexamer. The assembly of the HslU/HslV complex is dependent on binding of ATP.</text>
</comment>
<comment type="subcellular location">
    <subcellularLocation>
        <location evidence="1">Cytoplasm</location>
    </subcellularLocation>
</comment>
<comment type="similarity">
    <text evidence="1">Belongs to the peptidase T1B family. HslV subfamily.</text>
</comment>
<keyword id="KW-0021">Allosteric enzyme</keyword>
<keyword id="KW-0963">Cytoplasm</keyword>
<keyword id="KW-0378">Hydrolase</keyword>
<keyword id="KW-0479">Metal-binding</keyword>
<keyword id="KW-0645">Protease</keyword>
<keyword id="KW-0915">Sodium</keyword>
<keyword id="KW-0888">Threonine protease</keyword>
<proteinExistence type="inferred from homology"/>
<evidence type="ECO:0000255" key="1">
    <source>
        <dbReference type="HAMAP-Rule" id="MF_00248"/>
    </source>
</evidence>
<protein>
    <recommendedName>
        <fullName evidence="1">ATP-dependent protease subunit HslV</fullName>
        <ecNumber evidence="1">3.4.25.2</ecNumber>
    </recommendedName>
</protein>
<name>HSLV_GEOSW</name>
<reference key="1">
    <citation type="submission" date="2009-06" db="EMBL/GenBank/DDBJ databases">
        <title>Complete sequence of chromosome of Geopacillus sp. WCH70.</title>
        <authorList>
            <consortium name="US DOE Joint Genome Institute"/>
            <person name="Lucas S."/>
            <person name="Copeland A."/>
            <person name="Lapidus A."/>
            <person name="Glavina del Rio T."/>
            <person name="Dalin E."/>
            <person name="Tice H."/>
            <person name="Bruce D."/>
            <person name="Goodwin L."/>
            <person name="Pitluck S."/>
            <person name="Chertkov O."/>
            <person name="Brettin T."/>
            <person name="Detter J.C."/>
            <person name="Han C."/>
            <person name="Larimer F."/>
            <person name="Land M."/>
            <person name="Hauser L."/>
            <person name="Kyrpides N."/>
            <person name="Mikhailova N."/>
            <person name="Brumm P."/>
            <person name="Mead D.A."/>
            <person name="Richardson P."/>
        </authorList>
    </citation>
    <scope>NUCLEOTIDE SEQUENCE [LARGE SCALE GENOMIC DNA]</scope>
    <source>
        <strain>WCH70</strain>
    </source>
</reference>
<gene>
    <name evidence="1" type="primary">hslV</name>
    <name type="ordered locus">GWCH70_1105</name>
</gene>
<feature type="chain" id="PRO_1000204506" description="ATP-dependent protease subunit HslV">
    <location>
        <begin position="1"/>
        <end position="180"/>
    </location>
</feature>
<feature type="active site" evidence="1">
    <location>
        <position position="7"/>
    </location>
</feature>
<feature type="binding site" evidence="1">
    <location>
        <position position="165"/>
    </location>
    <ligand>
        <name>Na(+)</name>
        <dbReference type="ChEBI" id="CHEBI:29101"/>
    </ligand>
</feature>
<feature type="binding site" evidence="1">
    <location>
        <position position="168"/>
    </location>
    <ligand>
        <name>Na(+)</name>
        <dbReference type="ChEBI" id="CHEBI:29101"/>
    </ligand>
</feature>
<feature type="binding site" evidence="1">
    <location>
        <position position="171"/>
    </location>
    <ligand>
        <name>Na(+)</name>
        <dbReference type="ChEBI" id="CHEBI:29101"/>
    </ligand>
</feature>
<dbReference type="EC" id="3.4.25.2" evidence="1"/>
<dbReference type="EMBL" id="CP001638">
    <property type="protein sequence ID" value="ACS23965.1"/>
    <property type="molecule type" value="Genomic_DNA"/>
</dbReference>
<dbReference type="SMR" id="C5D8V8"/>
<dbReference type="STRING" id="471223.GWCH70_1105"/>
<dbReference type="MEROPS" id="T01.007"/>
<dbReference type="KEGG" id="gwc:GWCH70_1105"/>
<dbReference type="eggNOG" id="COG5405">
    <property type="taxonomic scope" value="Bacteria"/>
</dbReference>
<dbReference type="HOGENOM" id="CLU_093872_1_0_9"/>
<dbReference type="OrthoDB" id="9804884at2"/>
<dbReference type="GO" id="GO:0009376">
    <property type="term" value="C:HslUV protease complex"/>
    <property type="evidence" value="ECO:0007669"/>
    <property type="project" value="UniProtKB-UniRule"/>
</dbReference>
<dbReference type="GO" id="GO:0005839">
    <property type="term" value="C:proteasome core complex"/>
    <property type="evidence" value="ECO:0007669"/>
    <property type="project" value="InterPro"/>
</dbReference>
<dbReference type="GO" id="GO:0046872">
    <property type="term" value="F:metal ion binding"/>
    <property type="evidence" value="ECO:0007669"/>
    <property type="project" value="UniProtKB-KW"/>
</dbReference>
<dbReference type="GO" id="GO:0004298">
    <property type="term" value="F:threonine-type endopeptidase activity"/>
    <property type="evidence" value="ECO:0007669"/>
    <property type="project" value="UniProtKB-KW"/>
</dbReference>
<dbReference type="GO" id="GO:0051603">
    <property type="term" value="P:proteolysis involved in protein catabolic process"/>
    <property type="evidence" value="ECO:0007669"/>
    <property type="project" value="InterPro"/>
</dbReference>
<dbReference type="CDD" id="cd01913">
    <property type="entry name" value="protease_HslV"/>
    <property type="match status" value="1"/>
</dbReference>
<dbReference type="Gene3D" id="3.60.20.10">
    <property type="entry name" value="Glutamine Phosphoribosylpyrophosphate, subunit 1, domain 1"/>
    <property type="match status" value="1"/>
</dbReference>
<dbReference type="HAMAP" id="MF_00248">
    <property type="entry name" value="HslV"/>
    <property type="match status" value="1"/>
</dbReference>
<dbReference type="InterPro" id="IPR022281">
    <property type="entry name" value="ATP-dep_Prtase_HsIV_su"/>
</dbReference>
<dbReference type="InterPro" id="IPR029055">
    <property type="entry name" value="Ntn_hydrolases_N"/>
</dbReference>
<dbReference type="InterPro" id="IPR001353">
    <property type="entry name" value="Proteasome_sua/b"/>
</dbReference>
<dbReference type="InterPro" id="IPR023333">
    <property type="entry name" value="Proteasome_suB-type"/>
</dbReference>
<dbReference type="NCBIfam" id="TIGR03692">
    <property type="entry name" value="ATP_dep_HslV"/>
    <property type="match status" value="1"/>
</dbReference>
<dbReference type="NCBIfam" id="NF003964">
    <property type="entry name" value="PRK05456.1"/>
    <property type="match status" value="1"/>
</dbReference>
<dbReference type="PANTHER" id="PTHR32194:SF0">
    <property type="entry name" value="ATP-DEPENDENT PROTEASE SUBUNIT HSLV"/>
    <property type="match status" value="1"/>
</dbReference>
<dbReference type="PANTHER" id="PTHR32194">
    <property type="entry name" value="METALLOPROTEASE TLDD"/>
    <property type="match status" value="1"/>
</dbReference>
<dbReference type="Pfam" id="PF00227">
    <property type="entry name" value="Proteasome"/>
    <property type="match status" value="1"/>
</dbReference>
<dbReference type="PIRSF" id="PIRSF039093">
    <property type="entry name" value="HslV"/>
    <property type="match status" value="1"/>
</dbReference>
<dbReference type="SUPFAM" id="SSF56235">
    <property type="entry name" value="N-terminal nucleophile aminohydrolases (Ntn hydrolases)"/>
    <property type="match status" value="1"/>
</dbReference>
<dbReference type="PROSITE" id="PS51476">
    <property type="entry name" value="PROTEASOME_BETA_2"/>
    <property type="match status" value="1"/>
</dbReference>